<feature type="chain" id="PRO_0000405878" description="Phosphatidylethanolamine N-methyltransferase">
    <location>
        <begin position="1"/>
        <end position="971"/>
    </location>
</feature>
<feature type="topological domain" description="Lumenal" evidence="1">
    <location>
        <begin position="1"/>
        <end position="85"/>
    </location>
</feature>
<feature type="transmembrane region" description="Helical" evidence="1">
    <location>
        <begin position="86"/>
        <end position="106"/>
    </location>
</feature>
<feature type="topological domain" description="Cytoplasmic" evidence="1">
    <location>
        <begin position="107"/>
        <end position="109"/>
    </location>
</feature>
<feature type="transmembrane region" description="Helical" evidence="1">
    <location>
        <begin position="110"/>
        <end position="130"/>
    </location>
</feature>
<feature type="topological domain" description="Lumenal" evidence="1">
    <location>
        <begin position="131"/>
        <end position="195"/>
    </location>
</feature>
<feature type="transmembrane region" description="Helical" evidence="1">
    <location>
        <begin position="196"/>
        <end position="216"/>
    </location>
</feature>
<feature type="topological domain" description="Cytoplasmic" evidence="1">
    <location>
        <begin position="217"/>
        <end position="223"/>
    </location>
</feature>
<feature type="transmembrane region" description="Helical" evidence="1">
    <location>
        <begin position="224"/>
        <end position="244"/>
    </location>
</feature>
<feature type="topological domain" description="Lumenal" evidence="1">
    <location>
        <begin position="245"/>
        <end position="277"/>
    </location>
</feature>
<feature type="transmembrane region" description="Helical" evidence="1">
    <location>
        <begin position="278"/>
        <end position="298"/>
    </location>
</feature>
<feature type="topological domain" description="Cytoplasmic" evidence="1">
    <location>
        <begin position="299"/>
        <end position="300"/>
    </location>
</feature>
<feature type="transmembrane region" description="Helical" evidence="1">
    <location>
        <begin position="301"/>
        <end position="321"/>
    </location>
</feature>
<feature type="topological domain" description="Lumenal" evidence="1">
    <location>
        <begin position="322"/>
        <end position="389"/>
    </location>
</feature>
<feature type="transmembrane region" description="Helical" evidence="1">
    <location>
        <begin position="390"/>
        <end position="411"/>
    </location>
</feature>
<feature type="topological domain" description="Cytoplasmic" evidence="1">
    <location>
        <begin position="412"/>
        <end position="417"/>
    </location>
</feature>
<feature type="transmembrane region" description="Helical" evidence="1">
    <location>
        <begin position="418"/>
        <end position="441"/>
    </location>
</feature>
<feature type="topological domain" description="Lumenal" evidence="1">
    <location>
        <begin position="442"/>
        <end position="473"/>
    </location>
</feature>
<feature type="transmembrane region" description="Helical" evidence="1">
    <location>
        <begin position="474"/>
        <end position="494"/>
    </location>
</feature>
<feature type="topological domain" description="Cytoplasmic" evidence="1">
    <location>
        <begin position="495"/>
        <end position="496"/>
    </location>
</feature>
<feature type="transmembrane region" description="Helical" evidence="1">
    <location>
        <begin position="497"/>
        <end position="517"/>
    </location>
</feature>
<feature type="topological domain" description="Lumenal" evidence="1">
    <location>
        <begin position="518"/>
        <end position="575"/>
    </location>
</feature>
<feature type="transmembrane region" description="Helical" evidence="1">
    <location>
        <begin position="576"/>
        <end position="596"/>
    </location>
</feature>
<feature type="topological domain" description="Cytoplasmic" evidence="1">
    <location>
        <begin position="597"/>
        <end position="971"/>
    </location>
</feature>
<feature type="region of interest" description="Disordered" evidence="2">
    <location>
        <begin position="1"/>
        <end position="30"/>
    </location>
</feature>
<feature type="region of interest" description="Disordered" evidence="2">
    <location>
        <begin position="330"/>
        <end position="359"/>
    </location>
</feature>
<feature type="region of interest" description="Disordered" evidence="2">
    <location>
        <begin position="699"/>
        <end position="723"/>
    </location>
</feature>
<feature type="compositionally biased region" description="Basic and acidic residues" evidence="2">
    <location>
        <begin position="10"/>
        <end position="20"/>
    </location>
</feature>
<feature type="compositionally biased region" description="Polar residues" evidence="2">
    <location>
        <begin position="21"/>
        <end position="30"/>
    </location>
</feature>
<feature type="compositionally biased region" description="Polar residues" evidence="2">
    <location>
        <begin position="342"/>
        <end position="352"/>
    </location>
</feature>
<protein>
    <recommendedName>
        <fullName evidence="1">Phosphatidylethanolamine N-methyltransferase</fullName>
        <shortName evidence="1">PE methyltransferase</shortName>
        <shortName evidence="1">PEAMT</shortName>
        <shortName evidence="1">PEMT</shortName>
        <ecNumber evidence="1">2.1.1.17</ecNumber>
    </recommendedName>
</protein>
<evidence type="ECO:0000255" key="1">
    <source>
        <dbReference type="HAMAP-Rule" id="MF_03217"/>
    </source>
</evidence>
<evidence type="ECO:0000256" key="2">
    <source>
        <dbReference type="SAM" id="MobiDB-lite"/>
    </source>
</evidence>
<gene>
    <name type="primary">cho2</name>
    <name type="ORF">AO090012000204</name>
</gene>
<accession>Q2UDE5</accession>
<name>CHO2_ASPOR</name>
<organism>
    <name type="scientific">Aspergillus oryzae (strain ATCC 42149 / RIB 40)</name>
    <name type="common">Yellow koji mold</name>
    <dbReference type="NCBI Taxonomy" id="510516"/>
    <lineage>
        <taxon>Eukaryota</taxon>
        <taxon>Fungi</taxon>
        <taxon>Dikarya</taxon>
        <taxon>Ascomycota</taxon>
        <taxon>Pezizomycotina</taxon>
        <taxon>Eurotiomycetes</taxon>
        <taxon>Eurotiomycetidae</taxon>
        <taxon>Eurotiales</taxon>
        <taxon>Aspergillaceae</taxon>
        <taxon>Aspergillus</taxon>
        <taxon>Aspergillus subgen. Circumdati</taxon>
    </lineage>
</organism>
<dbReference type="EC" id="2.1.1.17" evidence="1"/>
<dbReference type="EMBL" id="BA000052">
    <property type="protein sequence ID" value="BAE60420.1"/>
    <property type="molecule type" value="Genomic_DNA"/>
</dbReference>
<dbReference type="RefSeq" id="XP_001727259.1">
    <property type="nucleotide sequence ID" value="XM_001727207.2"/>
</dbReference>
<dbReference type="SMR" id="Q2UDE5"/>
<dbReference type="STRING" id="510516.Q2UDE5"/>
<dbReference type="EnsemblFungi" id="BAE60420">
    <property type="protein sequence ID" value="BAE60420"/>
    <property type="gene ID" value="AO090012000204"/>
</dbReference>
<dbReference type="GeneID" id="5987733"/>
<dbReference type="KEGG" id="aor:AO090012000204"/>
<dbReference type="VEuPathDB" id="FungiDB:AO090012000204"/>
<dbReference type="HOGENOM" id="CLU_005987_0_0_1"/>
<dbReference type="OMA" id="RIWYSVG"/>
<dbReference type="OrthoDB" id="19449at5052"/>
<dbReference type="UniPathway" id="UPA00753"/>
<dbReference type="Proteomes" id="UP000006564">
    <property type="component" value="Chromosome 4"/>
</dbReference>
<dbReference type="GO" id="GO:0032541">
    <property type="term" value="C:cortical endoplasmic reticulum"/>
    <property type="evidence" value="ECO:0007669"/>
    <property type="project" value="EnsemblFungi"/>
</dbReference>
<dbReference type="GO" id="GO:0005789">
    <property type="term" value="C:endoplasmic reticulum membrane"/>
    <property type="evidence" value="ECO:0007669"/>
    <property type="project" value="UniProtKB-SubCell"/>
</dbReference>
<dbReference type="GO" id="GO:0097038">
    <property type="term" value="C:perinuclear endoplasmic reticulum"/>
    <property type="evidence" value="ECO:0007669"/>
    <property type="project" value="EnsemblFungi"/>
</dbReference>
<dbReference type="GO" id="GO:0004608">
    <property type="term" value="F:phosphatidylethanolamine N-methyltransferase activity"/>
    <property type="evidence" value="ECO:0007669"/>
    <property type="project" value="UniProtKB-UniRule"/>
</dbReference>
<dbReference type="GO" id="GO:0032259">
    <property type="term" value="P:methylation"/>
    <property type="evidence" value="ECO:0007669"/>
    <property type="project" value="UniProtKB-KW"/>
</dbReference>
<dbReference type="GO" id="GO:0006656">
    <property type="term" value="P:phosphatidylcholine biosynthetic process"/>
    <property type="evidence" value="ECO:0007669"/>
    <property type="project" value="UniProtKB-UniRule"/>
</dbReference>
<dbReference type="FunFam" id="2.60.40.2840:FF:000006">
    <property type="entry name" value="Phosphatidylethanolamine N-methyltransferase"/>
    <property type="match status" value="1"/>
</dbReference>
<dbReference type="Gene3D" id="2.60.40.2840">
    <property type="match status" value="1"/>
</dbReference>
<dbReference type="HAMAP" id="MF_03217">
    <property type="entry name" value="PEMT"/>
    <property type="match status" value="1"/>
</dbReference>
<dbReference type="InterPro" id="IPR007318">
    <property type="entry name" value="Phopholipid_MeTrfase"/>
</dbReference>
<dbReference type="InterPro" id="IPR016219">
    <property type="entry name" value="Phosphatid-EA_MeTrfase_fun"/>
</dbReference>
<dbReference type="PANTHER" id="PTHR32138">
    <property type="entry name" value="PHOSPHATIDYLETHANOLAMINE N-METHYLTRANSFERASE"/>
    <property type="match status" value="1"/>
</dbReference>
<dbReference type="PANTHER" id="PTHR32138:SF0">
    <property type="entry name" value="PHOSPHATIDYLETHANOLAMINE N-METHYLTRANSFERASE"/>
    <property type="match status" value="1"/>
</dbReference>
<dbReference type="Pfam" id="PF04191">
    <property type="entry name" value="PEMT"/>
    <property type="match status" value="2"/>
</dbReference>
<dbReference type="PIRSF" id="PIRSF000383">
    <property type="entry name" value="PEAMT"/>
    <property type="match status" value="1"/>
</dbReference>
<dbReference type="PROSITE" id="PS51598">
    <property type="entry name" value="SAM_CHO2"/>
    <property type="match status" value="1"/>
</dbReference>
<proteinExistence type="inferred from homology"/>
<reference key="1">
    <citation type="journal article" date="2005" name="Nature">
        <title>Genome sequencing and analysis of Aspergillus oryzae.</title>
        <authorList>
            <person name="Machida M."/>
            <person name="Asai K."/>
            <person name="Sano M."/>
            <person name="Tanaka T."/>
            <person name="Kumagai T."/>
            <person name="Terai G."/>
            <person name="Kusumoto K."/>
            <person name="Arima T."/>
            <person name="Akita O."/>
            <person name="Kashiwagi Y."/>
            <person name="Abe K."/>
            <person name="Gomi K."/>
            <person name="Horiuchi H."/>
            <person name="Kitamoto K."/>
            <person name="Kobayashi T."/>
            <person name="Takeuchi M."/>
            <person name="Denning D.W."/>
            <person name="Galagan J.E."/>
            <person name="Nierman W.C."/>
            <person name="Yu J."/>
            <person name="Archer D.B."/>
            <person name="Bennett J.W."/>
            <person name="Bhatnagar D."/>
            <person name="Cleveland T.E."/>
            <person name="Fedorova N.D."/>
            <person name="Gotoh O."/>
            <person name="Horikawa H."/>
            <person name="Hosoyama A."/>
            <person name="Ichinomiya M."/>
            <person name="Igarashi R."/>
            <person name="Iwashita K."/>
            <person name="Juvvadi P.R."/>
            <person name="Kato M."/>
            <person name="Kato Y."/>
            <person name="Kin T."/>
            <person name="Kokubun A."/>
            <person name="Maeda H."/>
            <person name="Maeyama N."/>
            <person name="Maruyama J."/>
            <person name="Nagasaki H."/>
            <person name="Nakajima T."/>
            <person name="Oda K."/>
            <person name="Okada K."/>
            <person name="Paulsen I."/>
            <person name="Sakamoto K."/>
            <person name="Sawano T."/>
            <person name="Takahashi M."/>
            <person name="Takase K."/>
            <person name="Terabayashi Y."/>
            <person name="Wortman J.R."/>
            <person name="Yamada O."/>
            <person name="Yamagata Y."/>
            <person name="Anazawa H."/>
            <person name="Hata Y."/>
            <person name="Koide Y."/>
            <person name="Komori T."/>
            <person name="Koyama Y."/>
            <person name="Minetoki T."/>
            <person name="Suharnan S."/>
            <person name="Tanaka A."/>
            <person name="Isono K."/>
            <person name="Kuhara S."/>
            <person name="Ogasawara N."/>
            <person name="Kikuchi H."/>
        </authorList>
    </citation>
    <scope>NUCLEOTIDE SEQUENCE [LARGE SCALE GENOMIC DNA]</scope>
    <source>
        <strain>ATCC 42149 / RIB 40</strain>
    </source>
</reference>
<sequence length="971" mass="109686">MDRGLSTSTRIDDEGLRERNVASQSTSTLSPEALTATGDVELKDKTGKDCKTFGRTPDGTVFTVPQTHDMVSQLLSPSEPKNLSDVIVLAILGAHILLLWQLPTGAKVPVFAIIYLFWRAAYNAGIGWLLHNQSHHKTLVRWAEKTKVFVNPATGKNPHPNVYNFFKRELETKIPHDYSFDEAPIEYNTWLVFRRLVDLILMCDFVSYCLFAIACSHHPVNESVLMTVLRWSAGIVLVLFNLWVKLDAHRVVKDFAWYWGDFFYLIDQELTFDGVFEMAPHPMYSVGYAGYYGISLMAASYKVLFISIIAHAAQFAFLVLVENPHIDKTYNPPPSRKRSAEQETGSVSSRTADSPIAPTPIDEQIPHAPTFSSSPPQSVHELLGLHNLDLYRITDTSSVLIQFLVFALTVLTPSTPWYQFLFVANAAVWRLWFSIGVGYMLHRQSNHKAWTRHFVKYGETPQEAWNQWKGTYHLSMIMCYASFIAAVWKMYNFPADWGYGLVLLRHVLGAGLISLQIWTSVSIYESLGEFGWFYGDFFFDGSSKLTYNGIYRFLNNPERVLGLAGVWGAVLITSSGAITFLALLSHILSLAFIQFIERPHMQKLYGQSLRQDAGLVKSLKKSLPPTLRQLHGSVDKIFDESFEFIEEIIETARPKLANGVNTFVKDTTALFQSYPARVTISRIDEDLAGYDSRDYSLEVEGTDSSSLAEHDQSTGREGANARMPLDRRGDLKNLVFEYGAPIRVKWTAPLNHSKKDWIGLYKVTDNTSREVTRVSSQGRWIAVNEGAYDNLTCEKGIVKSDVVIKATQQQDGDKRDLATGEVIFSGDKLFWTQGVFEFRYHHNAKHNVMAISRPFEIRIGRYEEEDDHELTQASVEKSLLPVIRSCFDRDPEIAPEAVDEPFGSLVERDGKFAKRVVFAVHQMFGVEFAPGVVQADGTVRNLAWRVCNAKRVLAPYSMSRNGASTPTERKE</sequence>
<comment type="function">
    <text evidence="1">Catalyzes the first step of the methylation pathway of phosphatidylcholine biosynthesis, the SAM-dependent methylation of phosphatidylethanolamine (PE) to phosphatidylmonomethylethanolamine (PMME).</text>
</comment>
<comment type="catalytic activity">
    <reaction evidence="1">
        <text>a 1,2-diacyl-sn-glycero-3-phosphoethanolamine + S-adenosyl-L-methionine = a 1,2-diacyl-sn-glycero-3-phospho-N-methylethanolamine + S-adenosyl-L-homocysteine + H(+)</text>
        <dbReference type="Rhea" id="RHEA:11164"/>
        <dbReference type="ChEBI" id="CHEBI:15378"/>
        <dbReference type="ChEBI" id="CHEBI:57856"/>
        <dbReference type="ChEBI" id="CHEBI:59789"/>
        <dbReference type="ChEBI" id="CHEBI:64573"/>
        <dbReference type="ChEBI" id="CHEBI:64612"/>
        <dbReference type="EC" id="2.1.1.17"/>
    </reaction>
</comment>
<comment type="pathway">
    <text evidence="1">Phospholipid metabolism; phosphatidylcholine biosynthesis.</text>
</comment>
<comment type="subcellular location">
    <subcellularLocation>
        <location evidence="1">Endoplasmic reticulum membrane</location>
        <topology evidence="1">Multi-pass membrane protein</topology>
    </subcellularLocation>
</comment>
<comment type="similarity">
    <text evidence="1">Belongs to the class VI-like SAM-binding methyltransferase superfamily. CHO2 family.</text>
</comment>
<keyword id="KW-0256">Endoplasmic reticulum</keyword>
<keyword id="KW-0444">Lipid biosynthesis</keyword>
<keyword id="KW-0443">Lipid metabolism</keyword>
<keyword id="KW-0472">Membrane</keyword>
<keyword id="KW-0489">Methyltransferase</keyword>
<keyword id="KW-0594">Phospholipid biosynthesis</keyword>
<keyword id="KW-1208">Phospholipid metabolism</keyword>
<keyword id="KW-1185">Reference proteome</keyword>
<keyword id="KW-0949">S-adenosyl-L-methionine</keyword>
<keyword id="KW-0808">Transferase</keyword>
<keyword id="KW-0812">Transmembrane</keyword>
<keyword id="KW-1133">Transmembrane helix</keyword>